<accession>Q6ACZ9</accession>
<keyword id="KW-1185">Reference proteome</keyword>
<keyword id="KW-0687">Ribonucleoprotein</keyword>
<keyword id="KW-0689">Ribosomal protein</keyword>
<keyword id="KW-0694">RNA-binding</keyword>
<keyword id="KW-0699">rRNA-binding</keyword>
<reference key="1">
    <citation type="journal article" date="2004" name="Mol. Plant Microbe Interact.">
        <title>The genome sequence of the Gram-positive sugarcane pathogen Leifsonia xyli subsp. xyli.</title>
        <authorList>
            <person name="Monteiro-Vitorello C.B."/>
            <person name="Camargo L.E.A."/>
            <person name="Van Sluys M.A."/>
            <person name="Kitajima J.P."/>
            <person name="Truffi D."/>
            <person name="do Amaral A.M."/>
            <person name="Harakava R."/>
            <person name="de Oliveira J.C.F."/>
            <person name="Wood D."/>
            <person name="de Oliveira M.C."/>
            <person name="Miyaki C.Y."/>
            <person name="Takita M.A."/>
            <person name="da Silva A.C.R."/>
            <person name="Furlan L.R."/>
            <person name="Carraro D.M."/>
            <person name="Camarotte G."/>
            <person name="Almeida N.F. Jr."/>
            <person name="Carrer H."/>
            <person name="Coutinho L.L."/>
            <person name="El-Dorry H.A."/>
            <person name="Ferro M.I.T."/>
            <person name="Gagliardi P.R."/>
            <person name="Giglioti E."/>
            <person name="Goldman M.H.S."/>
            <person name="Goldman G.H."/>
            <person name="Kimura E.T."/>
            <person name="Ferro E.S."/>
            <person name="Kuramae E.E."/>
            <person name="Lemos E.G.M."/>
            <person name="Lemos M.V.F."/>
            <person name="Mauro S.M.Z."/>
            <person name="Machado M.A."/>
            <person name="Marino C.L."/>
            <person name="Menck C.F."/>
            <person name="Nunes L.R."/>
            <person name="Oliveira R.C."/>
            <person name="Pereira G.G."/>
            <person name="Siqueira W."/>
            <person name="de Souza A.A."/>
            <person name="Tsai S.M."/>
            <person name="Zanca A.S."/>
            <person name="Simpson A.J.G."/>
            <person name="Brumbley S.M."/>
            <person name="Setubal J.C."/>
        </authorList>
    </citation>
    <scope>NUCLEOTIDE SEQUENCE [LARGE SCALE GENOMIC DNA]</scope>
    <source>
        <strain>CTCB07</strain>
    </source>
</reference>
<evidence type="ECO:0000255" key="1">
    <source>
        <dbReference type="HAMAP-Rule" id="MF_00531"/>
    </source>
</evidence>
<evidence type="ECO:0000305" key="2"/>
<comment type="function">
    <text evidence="1">Protein S19 forms a complex with S13 that binds strongly to the 16S ribosomal RNA.</text>
</comment>
<comment type="similarity">
    <text evidence="1">Belongs to the universal ribosomal protein uS19 family.</text>
</comment>
<dbReference type="EMBL" id="AE016822">
    <property type="protein sequence ID" value="AAT89745.1"/>
    <property type="molecule type" value="Genomic_DNA"/>
</dbReference>
<dbReference type="RefSeq" id="WP_011186731.1">
    <property type="nucleotide sequence ID" value="NC_006087.1"/>
</dbReference>
<dbReference type="SMR" id="Q6ACZ9"/>
<dbReference type="STRING" id="281090.Lxx20290"/>
<dbReference type="KEGG" id="lxx:Lxx20290"/>
<dbReference type="eggNOG" id="COG0185">
    <property type="taxonomic scope" value="Bacteria"/>
</dbReference>
<dbReference type="HOGENOM" id="CLU_144911_0_1_11"/>
<dbReference type="Proteomes" id="UP000001306">
    <property type="component" value="Chromosome"/>
</dbReference>
<dbReference type="GO" id="GO:0005737">
    <property type="term" value="C:cytoplasm"/>
    <property type="evidence" value="ECO:0007669"/>
    <property type="project" value="UniProtKB-ARBA"/>
</dbReference>
<dbReference type="GO" id="GO:0015935">
    <property type="term" value="C:small ribosomal subunit"/>
    <property type="evidence" value="ECO:0007669"/>
    <property type="project" value="InterPro"/>
</dbReference>
<dbReference type="GO" id="GO:0019843">
    <property type="term" value="F:rRNA binding"/>
    <property type="evidence" value="ECO:0007669"/>
    <property type="project" value="UniProtKB-UniRule"/>
</dbReference>
<dbReference type="GO" id="GO:0003735">
    <property type="term" value="F:structural constituent of ribosome"/>
    <property type="evidence" value="ECO:0007669"/>
    <property type="project" value="InterPro"/>
</dbReference>
<dbReference type="GO" id="GO:0000028">
    <property type="term" value="P:ribosomal small subunit assembly"/>
    <property type="evidence" value="ECO:0007669"/>
    <property type="project" value="TreeGrafter"/>
</dbReference>
<dbReference type="GO" id="GO:0006412">
    <property type="term" value="P:translation"/>
    <property type="evidence" value="ECO:0007669"/>
    <property type="project" value="UniProtKB-UniRule"/>
</dbReference>
<dbReference type="FunFam" id="3.30.860.10:FF:000001">
    <property type="entry name" value="30S ribosomal protein S19"/>
    <property type="match status" value="1"/>
</dbReference>
<dbReference type="Gene3D" id="3.30.860.10">
    <property type="entry name" value="30s Ribosomal Protein S19, Chain A"/>
    <property type="match status" value="1"/>
</dbReference>
<dbReference type="HAMAP" id="MF_00531">
    <property type="entry name" value="Ribosomal_uS19"/>
    <property type="match status" value="1"/>
</dbReference>
<dbReference type="InterPro" id="IPR002222">
    <property type="entry name" value="Ribosomal_uS19"/>
</dbReference>
<dbReference type="InterPro" id="IPR005732">
    <property type="entry name" value="Ribosomal_uS19_bac-type"/>
</dbReference>
<dbReference type="InterPro" id="IPR020934">
    <property type="entry name" value="Ribosomal_uS19_CS"/>
</dbReference>
<dbReference type="InterPro" id="IPR023575">
    <property type="entry name" value="Ribosomal_uS19_SF"/>
</dbReference>
<dbReference type="NCBIfam" id="TIGR01050">
    <property type="entry name" value="rpsS_bact"/>
    <property type="match status" value="1"/>
</dbReference>
<dbReference type="PANTHER" id="PTHR11880">
    <property type="entry name" value="RIBOSOMAL PROTEIN S19P FAMILY MEMBER"/>
    <property type="match status" value="1"/>
</dbReference>
<dbReference type="PANTHER" id="PTHR11880:SF8">
    <property type="entry name" value="SMALL RIBOSOMAL SUBUNIT PROTEIN US19M"/>
    <property type="match status" value="1"/>
</dbReference>
<dbReference type="Pfam" id="PF00203">
    <property type="entry name" value="Ribosomal_S19"/>
    <property type="match status" value="1"/>
</dbReference>
<dbReference type="PIRSF" id="PIRSF002144">
    <property type="entry name" value="Ribosomal_S19"/>
    <property type="match status" value="1"/>
</dbReference>
<dbReference type="PRINTS" id="PR00975">
    <property type="entry name" value="RIBOSOMALS19"/>
</dbReference>
<dbReference type="SUPFAM" id="SSF54570">
    <property type="entry name" value="Ribosomal protein S19"/>
    <property type="match status" value="1"/>
</dbReference>
<dbReference type="PROSITE" id="PS00323">
    <property type="entry name" value="RIBOSOMAL_S19"/>
    <property type="match status" value="1"/>
</dbReference>
<proteinExistence type="inferred from homology"/>
<gene>
    <name evidence="1" type="primary">rpsS</name>
    <name type="ordered locus">Lxx20290</name>
</gene>
<feature type="chain" id="PRO_0000129841" description="Small ribosomal subunit protein uS19">
    <location>
        <begin position="1"/>
        <end position="93"/>
    </location>
</feature>
<name>RS19_LEIXX</name>
<protein>
    <recommendedName>
        <fullName evidence="1">Small ribosomal subunit protein uS19</fullName>
    </recommendedName>
    <alternativeName>
        <fullName evidence="2">30S ribosomal protein S19</fullName>
    </alternativeName>
</protein>
<sequence>MPRSLKKGPFVDEHLFRKVVAANEANSKNVIKTWSRRSMIVPAMLGHTIAVHDGRKHIPVFVTETMVGHKLGEFAPTRTFRGHVKDDKRGRRR</sequence>
<organism>
    <name type="scientific">Leifsonia xyli subsp. xyli (strain CTCB07)</name>
    <dbReference type="NCBI Taxonomy" id="281090"/>
    <lineage>
        <taxon>Bacteria</taxon>
        <taxon>Bacillati</taxon>
        <taxon>Actinomycetota</taxon>
        <taxon>Actinomycetes</taxon>
        <taxon>Micrococcales</taxon>
        <taxon>Microbacteriaceae</taxon>
        <taxon>Leifsonia</taxon>
    </lineage>
</organism>